<organism>
    <name type="scientific">Pectobacterium atrosepticum (strain SCRI 1043 / ATCC BAA-672)</name>
    <name type="common">Erwinia carotovora subsp. atroseptica</name>
    <dbReference type="NCBI Taxonomy" id="218491"/>
    <lineage>
        <taxon>Bacteria</taxon>
        <taxon>Pseudomonadati</taxon>
        <taxon>Pseudomonadota</taxon>
        <taxon>Gammaproteobacteria</taxon>
        <taxon>Enterobacterales</taxon>
        <taxon>Pectobacteriaceae</taxon>
        <taxon>Pectobacterium</taxon>
    </lineage>
</organism>
<dbReference type="EMBL" id="BX950851">
    <property type="protein sequence ID" value="CAG76703.1"/>
    <property type="molecule type" value="Genomic_DNA"/>
</dbReference>
<dbReference type="RefSeq" id="WP_011095305.1">
    <property type="nucleotide sequence ID" value="NC_004547.2"/>
</dbReference>
<dbReference type="SMR" id="Q6D0J4"/>
<dbReference type="STRING" id="218491.ECA3804"/>
<dbReference type="GeneID" id="57210423"/>
<dbReference type="KEGG" id="eca:ECA3804"/>
<dbReference type="PATRIC" id="fig|218491.5.peg.3859"/>
<dbReference type="eggNOG" id="COG3024">
    <property type="taxonomic scope" value="Bacteria"/>
</dbReference>
<dbReference type="HOGENOM" id="CLU_178280_3_1_6"/>
<dbReference type="OrthoDB" id="9809663at2"/>
<dbReference type="Proteomes" id="UP000007966">
    <property type="component" value="Chromosome"/>
</dbReference>
<dbReference type="GO" id="GO:0008657">
    <property type="term" value="F:DNA topoisomerase type II (double strand cut, ATP-hydrolyzing) inhibitor activity"/>
    <property type="evidence" value="ECO:0007669"/>
    <property type="project" value="UniProtKB-UniRule"/>
</dbReference>
<dbReference type="GO" id="GO:0008270">
    <property type="term" value="F:zinc ion binding"/>
    <property type="evidence" value="ECO:0007669"/>
    <property type="project" value="UniProtKB-UniRule"/>
</dbReference>
<dbReference type="GO" id="GO:0006355">
    <property type="term" value="P:regulation of DNA-templated transcription"/>
    <property type="evidence" value="ECO:0007669"/>
    <property type="project" value="InterPro"/>
</dbReference>
<dbReference type="Gene3D" id="3.30.50.10">
    <property type="entry name" value="Erythroid Transcription Factor GATA-1, subunit A"/>
    <property type="match status" value="1"/>
</dbReference>
<dbReference type="HAMAP" id="MF_00649">
    <property type="entry name" value="DNA_gyrase_inhibitor_YacG"/>
    <property type="match status" value="1"/>
</dbReference>
<dbReference type="InterPro" id="IPR005584">
    <property type="entry name" value="DNA_gyrase_inhibitor_YacG"/>
</dbReference>
<dbReference type="InterPro" id="IPR013088">
    <property type="entry name" value="Znf_NHR/GATA"/>
</dbReference>
<dbReference type="NCBIfam" id="NF001638">
    <property type="entry name" value="PRK00418.1"/>
    <property type="match status" value="1"/>
</dbReference>
<dbReference type="PANTHER" id="PTHR36150">
    <property type="entry name" value="DNA GYRASE INHIBITOR YACG"/>
    <property type="match status" value="1"/>
</dbReference>
<dbReference type="PANTHER" id="PTHR36150:SF1">
    <property type="entry name" value="DNA GYRASE INHIBITOR YACG"/>
    <property type="match status" value="1"/>
</dbReference>
<dbReference type="Pfam" id="PF03884">
    <property type="entry name" value="YacG"/>
    <property type="match status" value="1"/>
</dbReference>
<dbReference type="SUPFAM" id="SSF57716">
    <property type="entry name" value="Glucocorticoid receptor-like (DNA-binding domain)"/>
    <property type="match status" value="1"/>
</dbReference>
<keyword id="KW-0479">Metal-binding</keyword>
<keyword id="KW-1185">Reference proteome</keyword>
<keyword id="KW-0862">Zinc</keyword>
<name>YACG_PECAS</name>
<proteinExistence type="inferred from homology"/>
<accession>Q6D0J4</accession>
<feature type="chain" id="PRO_0000211698" description="DNA gyrase inhibitor YacG">
    <location>
        <begin position="1"/>
        <end position="64"/>
    </location>
</feature>
<feature type="binding site" evidence="1">
    <location>
        <position position="10"/>
    </location>
    <ligand>
        <name>Zn(2+)</name>
        <dbReference type="ChEBI" id="CHEBI:29105"/>
    </ligand>
</feature>
<feature type="binding site" evidence="1">
    <location>
        <position position="13"/>
    </location>
    <ligand>
        <name>Zn(2+)</name>
        <dbReference type="ChEBI" id="CHEBI:29105"/>
    </ligand>
</feature>
<feature type="binding site" evidence="1">
    <location>
        <position position="29"/>
    </location>
    <ligand>
        <name>Zn(2+)</name>
        <dbReference type="ChEBI" id="CHEBI:29105"/>
    </ligand>
</feature>
<feature type="binding site" evidence="1">
    <location>
        <position position="33"/>
    </location>
    <ligand>
        <name>Zn(2+)</name>
        <dbReference type="ChEBI" id="CHEBI:29105"/>
    </ligand>
</feature>
<comment type="function">
    <text evidence="1">Inhibits all the catalytic activities of DNA gyrase by preventing its interaction with DNA. Acts by binding directly to the C-terminal domain of GyrB, which probably disrupts DNA binding by the gyrase.</text>
</comment>
<comment type="cofactor">
    <cofactor evidence="1">
        <name>Zn(2+)</name>
        <dbReference type="ChEBI" id="CHEBI:29105"/>
    </cofactor>
    <text evidence="1">Binds 1 zinc ion.</text>
</comment>
<comment type="subunit">
    <text evidence="1">Interacts with GyrB.</text>
</comment>
<comment type="similarity">
    <text evidence="1">Belongs to the DNA gyrase inhibitor YacG family.</text>
</comment>
<reference key="1">
    <citation type="journal article" date="2004" name="Proc. Natl. Acad. Sci. U.S.A.">
        <title>Genome sequence of the enterobacterial phytopathogen Erwinia carotovora subsp. atroseptica and characterization of virulence factors.</title>
        <authorList>
            <person name="Bell K.S."/>
            <person name="Sebaihia M."/>
            <person name="Pritchard L."/>
            <person name="Holden M.T.G."/>
            <person name="Hyman L.J."/>
            <person name="Holeva M.C."/>
            <person name="Thomson N.R."/>
            <person name="Bentley S.D."/>
            <person name="Churcher L.J.C."/>
            <person name="Mungall K."/>
            <person name="Atkin R."/>
            <person name="Bason N."/>
            <person name="Brooks K."/>
            <person name="Chillingworth T."/>
            <person name="Clark K."/>
            <person name="Doggett J."/>
            <person name="Fraser A."/>
            <person name="Hance Z."/>
            <person name="Hauser H."/>
            <person name="Jagels K."/>
            <person name="Moule S."/>
            <person name="Norbertczak H."/>
            <person name="Ormond D."/>
            <person name="Price C."/>
            <person name="Quail M.A."/>
            <person name="Sanders M."/>
            <person name="Walker D."/>
            <person name="Whitehead S."/>
            <person name="Salmond G.P.C."/>
            <person name="Birch P.R.J."/>
            <person name="Parkhill J."/>
            <person name="Toth I.K."/>
        </authorList>
    </citation>
    <scope>NUCLEOTIDE SEQUENCE [LARGE SCALE GENOMIC DNA]</scope>
    <source>
        <strain>SCRI 1043 / ATCC BAA-672</strain>
    </source>
</reference>
<sequence>MTTEITTVKCPTCKQAVIWDAASIYRPFCSKRCQLIDLGEWADEEKCIPSDDMVSDSEDWSETR</sequence>
<gene>
    <name evidence="1" type="primary">yacG</name>
    <name type="ordered locus">ECA3804</name>
</gene>
<evidence type="ECO:0000255" key="1">
    <source>
        <dbReference type="HAMAP-Rule" id="MF_00649"/>
    </source>
</evidence>
<protein>
    <recommendedName>
        <fullName evidence="1">DNA gyrase inhibitor YacG</fullName>
    </recommendedName>
</protein>